<keyword id="KW-0249">Electron transport</keyword>
<keyword id="KW-0349">Heme</keyword>
<keyword id="KW-0408">Iron</keyword>
<keyword id="KW-0472">Membrane</keyword>
<keyword id="KW-0479">Metal-binding</keyword>
<keyword id="KW-0496">Mitochondrion</keyword>
<keyword id="KW-0999">Mitochondrion inner membrane</keyword>
<keyword id="KW-0679">Respiratory chain</keyword>
<keyword id="KW-0812">Transmembrane</keyword>
<keyword id="KW-1133">Transmembrane helix</keyword>
<keyword id="KW-0813">Transport</keyword>
<keyword id="KW-0830">Ubiquinone</keyword>
<name>CYB_CRAZI</name>
<proteinExistence type="inferred from homology"/>
<geneLocation type="mitochondrion"/>
<feature type="chain" id="PRO_0000254964" description="Cytochrome b">
    <location>
        <begin position="1"/>
        <end position="379"/>
    </location>
</feature>
<feature type="transmembrane region" description="Helical" evidence="2">
    <location>
        <begin position="33"/>
        <end position="53"/>
    </location>
</feature>
<feature type="transmembrane region" description="Helical" evidence="2">
    <location>
        <begin position="77"/>
        <end position="98"/>
    </location>
</feature>
<feature type="transmembrane region" description="Helical" evidence="2">
    <location>
        <begin position="113"/>
        <end position="133"/>
    </location>
</feature>
<feature type="transmembrane region" description="Helical" evidence="2">
    <location>
        <begin position="178"/>
        <end position="198"/>
    </location>
</feature>
<feature type="transmembrane region" description="Helical" evidence="2">
    <location>
        <begin position="226"/>
        <end position="246"/>
    </location>
</feature>
<feature type="transmembrane region" description="Helical" evidence="2">
    <location>
        <begin position="288"/>
        <end position="308"/>
    </location>
</feature>
<feature type="transmembrane region" description="Helical" evidence="2">
    <location>
        <begin position="320"/>
        <end position="340"/>
    </location>
</feature>
<feature type="transmembrane region" description="Helical" evidence="2">
    <location>
        <begin position="347"/>
        <end position="367"/>
    </location>
</feature>
<feature type="binding site" description="axial binding residue" evidence="2">
    <location>
        <position position="83"/>
    </location>
    <ligand>
        <name>heme b</name>
        <dbReference type="ChEBI" id="CHEBI:60344"/>
        <label>b562</label>
    </ligand>
    <ligandPart>
        <name>Fe</name>
        <dbReference type="ChEBI" id="CHEBI:18248"/>
    </ligandPart>
</feature>
<feature type="binding site" description="axial binding residue" evidence="2">
    <location>
        <position position="97"/>
    </location>
    <ligand>
        <name>heme b</name>
        <dbReference type="ChEBI" id="CHEBI:60344"/>
        <label>b566</label>
    </ligand>
    <ligandPart>
        <name>Fe</name>
        <dbReference type="ChEBI" id="CHEBI:18248"/>
    </ligandPart>
</feature>
<feature type="binding site" description="axial binding residue" evidence="2">
    <location>
        <position position="182"/>
    </location>
    <ligand>
        <name>heme b</name>
        <dbReference type="ChEBI" id="CHEBI:60344"/>
        <label>b562</label>
    </ligand>
    <ligandPart>
        <name>Fe</name>
        <dbReference type="ChEBI" id="CHEBI:18248"/>
    </ligandPart>
</feature>
<feature type="binding site" description="axial binding residue" evidence="2">
    <location>
        <position position="196"/>
    </location>
    <ligand>
        <name>heme b</name>
        <dbReference type="ChEBI" id="CHEBI:60344"/>
        <label>b566</label>
    </ligand>
    <ligandPart>
        <name>Fe</name>
        <dbReference type="ChEBI" id="CHEBI:18248"/>
    </ligandPart>
</feature>
<feature type="binding site" evidence="2">
    <location>
        <position position="201"/>
    </location>
    <ligand>
        <name>a ubiquinone</name>
        <dbReference type="ChEBI" id="CHEBI:16389"/>
    </ligand>
</feature>
<gene>
    <name type="primary">MT-CYB</name>
    <name type="synonym">COB</name>
    <name type="synonym">CYTB</name>
    <name type="synonym">MTCYB</name>
</gene>
<evidence type="ECO:0000250" key="1"/>
<evidence type="ECO:0000250" key="2">
    <source>
        <dbReference type="UniProtKB" id="P00157"/>
    </source>
</evidence>
<evidence type="ECO:0000255" key="3">
    <source>
        <dbReference type="PROSITE-ProRule" id="PRU00967"/>
    </source>
</evidence>
<evidence type="ECO:0000255" key="4">
    <source>
        <dbReference type="PROSITE-ProRule" id="PRU00968"/>
    </source>
</evidence>
<organism>
    <name type="scientific">Cratogeomys zinseri</name>
    <name type="common">Zinser's pocket gopher</name>
    <name type="synonym">Pappogeomys zinseri</name>
    <dbReference type="NCBI Taxonomy" id="164517"/>
    <lineage>
        <taxon>Eukaryota</taxon>
        <taxon>Metazoa</taxon>
        <taxon>Chordata</taxon>
        <taxon>Craniata</taxon>
        <taxon>Vertebrata</taxon>
        <taxon>Euteleostomi</taxon>
        <taxon>Mammalia</taxon>
        <taxon>Eutheria</taxon>
        <taxon>Euarchontoglires</taxon>
        <taxon>Glires</taxon>
        <taxon>Rodentia</taxon>
        <taxon>Castorimorpha</taxon>
        <taxon>Geomyidae</taxon>
        <taxon>Cratogeomys</taxon>
    </lineage>
</organism>
<reference key="1">
    <citation type="journal article" date="2002" name="Mol. Phylogenet. Evol.">
        <title>Systematics and phylogeography of pocket gophers in the genera Cratogeomys and Pappogeomys.</title>
        <authorList>
            <person name="Demastes J.W."/>
            <person name="Spradling T.A."/>
            <person name="Hafner M.S."/>
            <person name="Hafner D.J."/>
            <person name="Reed D.L."/>
        </authorList>
    </citation>
    <scope>NUCLEOTIDE SEQUENCE [GENOMIC DNA]</scope>
</reference>
<comment type="function">
    <text evidence="2">Component of the ubiquinol-cytochrome c reductase complex (complex III or cytochrome b-c1 complex) that is part of the mitochondrial respiratory chain. The b-c1 complex mediates electron transfer from ubiquinol to cytochrome c. Contributes to the generation of a proton gradient across the mitochondrial membrane that is then used for ATP synthesis.</text>
</comment>
<comment type="cofactor">
    <cofactor evidence="2">
        <name>heme b</name>
        <dbReference type="ChEBI" id="CHEBI:60344"/>
    </cofactor>
    <text evidence="2">Binds 2 heme b groups non-covalently.</text>
</comment>
<comment type="subunit">
    <text evidence="2">The cytochrome bc1 complex contains 11 subunits: 3 respiratory subunits (MT-CYB, CYC1 and UQCRFS1), 2 core proteins (UQCRC1 and UQCRC2) and 6 low-molecular weight proteins (UQCRH/QCR6, UQCRB/QCR7, UQCRQ/QCR8, UQCR10/QCR9, UQCR11/QCR10 and a cleavage product of UQCRFS1). This cytochrome bc1 complex then forms a dimer.</text>
</comment>
<comment type="subcellular location">
    <subcellularLocation>
        <location evidence="2">Mitochondrion inner membrane</location>
        <topology evidence="2">Multi-pass membrane protein</topology>
    </subcellularLocation>
</comment>
<comment type="miscellaneous">
    <text evidence="1">Heme 1 (or BL or b562) is low-potential and absorbs at about 562 nm, and heme 2 (or BH or b566) is high-potential and absorbs at about 566 nm.</text>
</comment>
<comment type="similarity">
    <text evidence="3 4">Belongs to the cytochrome b family.</text>
</comment>
<comment type="caution">
    <text evidence="2">The full-length protein contains only eight transmembrane helices, not nine as predicted by bioinformatics tools.</text>
</comment>
<sequence>MTIMRKSHPLMKIVNHAFIDLPTPPNISGWWNFGSLLGLCLVLQILTGLFLAMHYTSDTTTAFSSVTHICRDVNYGWLIRYMHANGASLFFICLYIHIGRGIYYGSYMYTETWNIGILLLFLTMATAFVGYVLPWGQMSFWGATVITNLLSAIPYIGQDLVEWIWGGFSVDKSTLTRFFALHFILPFIITALAMVHLLFLHETGSSNPLGIPSDCGKVPFHPYYTTKDLLGAILLLMLFMTLVLFFPDKLGDPDNYTPANPLNTPPHIKPEWYFLFAYAILRSIPSKLGGVCALVFSILVLALFPYLHTSKQRSLSFRPLSQTLFWALISDLIILTWIGGQPVEPPYIIIGQVASILYFSIILIFMPMAGLIENKMLKW</sequence>
<dbReference type="EMBL" id="AF302170">
    <property type="protein sequence ID" value="AAL69583.1"/>
    <property type="molecule type" value="Genomic_DNA"/>
</dbReference>
<dbReference type="SMR" id="Q8WDV2"/>
<dbReference type="GO" id="GO:0005743">
    <property type="term" value="C:mitochondrial inner membrane"/>
    <property type="evidence" value="ECO:0007669"/>
    <property type="project" value="UniProtKB-SubCell"/>
</dbReference>
<dbReference type="GO" id="GO:0045275">
    <property type="term" value="C:respiratory chain complex III"/>
    <property type="evidence" value="ECO:0007669"/>
    <property type="project" value="InterPro"/>
</dbReference>
<dbReference type="GO" id="GO:0046872">
    <property type="term" value="F:metal ion binding"/>
    <property type="evidence" value="ECO:0007669"/>
    <property type="project" value="UniProtKB-KW"/>
</dbReference>
<dbReference type="GO" id="GO:0008121">
    <property type="term" value="F:ubiquinol-cytochrome-c reductase activity"/>
    <property type="evidence" value="ECO:0007669"/>
    <property type="project" value="InterPro"/>
</dbReference>
<dbReference type="GO" id="GO:0006122">
    <property type="term" value="P:mitochondrial electron transport, ubiquinol to cytochrome c"/>
    <property type="evidence" value="ECO:0007669"/>
    <property type="project" value="TreeGrafter"/>
</dbReference>
<dbReference type="CDD" id="cd00290">
    <property type="entry name" value="cytochrome_b_C"/>
    <property type="match status" value="1"/>
</dbReference>
<dbReference type="CDD" id="cd00284">
    <property type="entry name" value="Cytochrome_b_N"/>
    <property type="match status" value="1"/>
</dbReference>
<dbReference type="FunFam" id="1.20.810.10:FF:000002">
    <property type="entry name" value="Cytochrome b"/>
    <property type="match status" value="1"/>
</dbReference>
<dbReference type="Gene3D" id="1.20.810.10">
    <property type="entry name" value="Cytochrome Bc1 Complex, Chain C"/>
    <property type="match status" value="1"/>
</dbReference>
<dbReference type="InterPro" id="IPR005798">
    <property type="entry name" value="Cyt_b/b6_C"/>
</dbReference>
<dbReference type="InterPro" id="IPR036150">
    <property type="entry name" value="Cyt_b/b6_C_sf"/>
</dbReference>
<dbReference type="InterPro" id="IPR005797">
    <property type="entry name" value="Cyt_b/b6_N"/>
</dbReference>
<dbReference type="InterPro" id="IPR027387">
    <property type="entry name" value="Cytb/b6-like_sf"/>
</dbReference>
<dbReference type="InterPro" id="IPR030689">
    <property type="entry name" value="Cytochrome_b"/>
</dbReference>
<dbReference type="InterPro" id="IPR048260">
    <property type="entry name" value="Cytochrome_b_C_euk/bac"/>
</dbReference>
<dbReference type="InterPro" id="IPR048259">
    <property type="entry name" value="Cytochrome_b_N_euk/bac"/>
</dbReference>
<dbReference type="InterPro" id="IPR016174">
    <property type="entry name" value="Di-haem_cyt_TM"/>
</dbReference>
<dbReference type="PANTHER" id="PTHR19271">
    <property type="entry name" value="CYTOCHROME B"/>
    <property type="match status" value="1"/>
</dbReference>
<dbReference type="PANTHER" id="PTHR19271:SF16">
    <property type="entry name" value="CYTOCHROME B"/>
    <property type="match status" value="1"/>
</dbReference>
<dbReference type="Pfam" id="PF00032">
    <property type="entry name" value="Cytochrom_B_C"/>
    <property type="match status" value="1"/>
</dbReference>
<dbReference type="Pfam" id="PF00033">
    <property type="entry name" value="Cytochrome_B"/>
    <property type="match status" value="1"/>
</dbReference>
<dbReference type="PIRSF" id="PIRSF038885">
    <property type="entry name" value="COB"/>
    <property type="match status" value="1"/>
</dbReference>
<dbReference type="SUPFAM" id="SSF81648">
    <property type="entry name" value="a domain/subunit of cytochrome bc1 complex (Ubiquinol-cytochrome c reductase)"/>
    <property type="match status" value="1"/>
</dbReference>
<dbReference type="SUPFAM" id="SSF81342">
    <property type="entry name" value="Transmembrane di-heme cytochromes"/>
    <property type="match status" value="1"/>
</dbReference>
<dbReference type="PROSITE" id="PS51003">
    <property type="entry name" value="CYTB_CTER"/>
    <property type="match status" value="1"/>
</dbReference>
<dbReference type="PROSITE" id="PS51002">
    <property type="entry name" value="CYTB_NTER"/>
    <property type="match status" value="1"/>
</dbReference>
<accession>Q8WDV2</accession>
<protein>
    <recommendedName>
        <fullName>Cytochrome b</fullName>
    </recommendedName>
    <alternativeName>
        <fullName>Complex III subunit 3</fullName>
    </alternativeName>
    <alternativeName>
        <fullName>Complex III subunit III</fullName>
    </alternativeName>
    <alternativeName>
        <fullName>Cytochrome b-c1 complex subunit 3</fullName>
    </alternativeName>
    <alternativeName>
        <fullName>Ubiquinol-cytochrome-c reductase complex cytochrome b subunit</fullName>
    </alternativeName>
</protein>